<proteinExistence type="evidence at protein level"/>
<sequence length="547" mass="59541">MATMVPSVLWPRACWTLLVCCLLTPGVQGQEFLLRVEPQNPVLSAGGSLFVNCSTDCPSSEKIALETSLSKELVASGMGWAAFNLSNVTGNSRILCSVYCNGSQITGSSNITVYRLPERVELAPLPPWQPVGQNFTLRCQVEDGSPRTSLTVVLLRWEEELSRQPAVEEPAEVTATVLASRDDHGAPFSCRTELDMQPQGLGLFVNTSAPRQLRTFVLPVTPPRLVAPRFLEVETSWPVDCTLDGLFPASEAQVYLALGDQMLNATVMNHGDTLTATATATARADQEGAREIVCNVTLGGERREARENLTVFSFLGPIVNLSEPTAHEGSTVTVSCMAGARVQVTLDGVPAAAPGQPAQLQLNATESDDGRSFFCSATLEVDGEFLHRNSSVQLRVLYGPKIDRATCPQHLKWKDKTRHVLQCQARGNPYPELRCLKEGSSREVPVGIPFFVNVTHNGTYQCQASSSRGKYTLVVVMDIEAGSSHFVPVFVAVLLTLGVVTIVLALMYVFREHQRSGSYHVREESTYLPLTSMQPTEAMGEEPSRAE</sequence>
<name>ICAM3_HUMAN</name>
<reference key="1">
    <citation type="journal article" date="1992" name="Nature">
        <title>Molecular cloning of ICAM-3, a third ligand for LFA-1, constitutively expressed on resting leukocytes.</title>
        <authorList>
            <person name="Fawcett J."/>
            <person name="Holness C.L."/>
            <person name="Needham L.A."/>
            <person name="Turley H."/>
            <person name="Gatter K.C."/>
            <person name="Mason D.Y."/>
            <person name="Simmons D.L."/>
        </authorList>
    </citation>
    <scope>NUCLEOTIDE SEQUENCE [MRNA]</scope>
    <scope>FUNCTION</scope>
    <scope>TISSUE SPECIFICITY</scope>
    <scope>VARIANTS GLY-115 AND GLY-143</scope>
</reference>
<reference key="2">
    <citation type="journal article" date="1992" name="Nature">
        <title>Cloning and characterization of a new intercellular adhesion molecule ICAM-R.</title>
        <authorList>
            <person name="Vazeux R."/>
            <person name="Hoffman P.A."/>
            <person name="Tomita J.K."/>
            <person name="Dickinson E.S."/>
            <person name="Jasman R.L."/>
            <person name="St John T."/>
            <person name="Gallatin W.M."/>
        </authorList>
    </citation>
    <scope>NUCLEOTIDE SEQUENCE [MRNA]</scope>
    <scope>VARIANTS GLY-115 AND GLY-143</scope>
</reference>
<reference key="3">
    <citation type="journal article" date="1993" name="J. Exp. Med.">
        <title>Cloning and expression of intercellular adhesion molecule 3 reveals strong homology to other immunoglobulin family counter-receptors for lymphocyte function-associated antigen 1.</title>
        <authorList>
            <person name="de Fougerolles A.R."/>
            <person name="Kilckstein L.B."/>
            <person name="Springer T.A."/>
        </authorList>
    </citation>
    <scope>NUCLEOTIDE SEQUENCE [MRNA]</scope>
    <scope>VARIANTS GLY-115 AND GLY-143</scope>
</reference>
<reference key="4">
    <citation type="submission" date="2005-09" db="EMBL/GenBank/DDBJ databases">
        <title>Genetic variation in immune response genes.</title>
        <authorList>
            <person name="Tan J."/>
            <person name="Ong R."/>
            <person name="Hibberd M.L."/>
            <person name="Seielstad M."/>
        </authorList>
    </citation>
    <scope>NUCLEOTIDE SEQUENCE [GENOMIC DNA]</scope>
</reference>
<reference key="5">
    <citation type="submission" date="2005-07" db="EMBL/GenBank/DDBJ databases">
        <authorList>
            <person name="Mural R.J."/>
            <person name="Istrail S."/>
            <person name="Sutton G.G."/>
            <person name="Florea L."/>
            <person name="Halpern A.L."/>
            <person name="Mobarry C.M."/>
            <person name="Lippert R."/>
            <person name="Walenz B."/>
            <person name="Shatkay H."/>
            <person name="Dew I."/>
            <person name="Miller J.R."/>
            <person name="Flanigan M.J."/>
            <person name="Edwards N.J."/>
            <person name="Bolanos R."/>
            <person name="Fasulo D."/>
            <person name="Halldorsson B.V."/>
            <person name="Hannenhalli S."/>
            <person name="Turner R."/>
            <person name="Yooseph S."/>
            <person name="Lu F."/>
            <person name="Nusskern D.R."/>
            <person name="Shue B.C."/>
            <person name="Zheng X.H."/>
            <person name="Zhong F."/>
            <person name="Delcher A.L."/>
            <person name="Huson D.H."/>
            <person name="Kravitz S.A."/>
            <person name="Mouchard L."/>
            <person name="Reinert K."/>
            <person name="Remington K.A."/>
            <person name="Clark A.G."/>
            <person name="Waterman M.S."/>
            <person name="Eichler E.E."/>
            <person name="Adams M.D."/>
            <person name="Hunkapiller M.W."/>
            <person name="Myers E.W."/>
            <person name="Venter J.C."/>
        </authorList>
    </citation>
    <scope>NUCLEOTIDE SEQUENCE [LARGE SCALE GENOMIC DNA]</scope>
</reference>
<reference key="6">
    <citation type="journal article" date="2004" name="Genome Res.">
        <title>The status, quality, and expansion of the NIH full-length cDNA project: the Mammalian Gene Collection (MGC).</title>
        <authorList>
            <consortium name="The MGC Project Team"/>
        </authorList>
    </citation>
    <scope>NUCLEOTIDE SEQUENCE [LARGE SCALE MRNA]</scope>
    <source>
        <tissue>Lung</tissue>
    </source>
</reference>
<reference key="7">
    <citation type="journal article" date="1993" name="Eur. J. Immunol.">
        <title>CDw50 and ICAM-3: two names for the same molecule.</title>
        <authorList>
            <person name="Juan M."/>
            <person name="Vilella R."/>
            <person name="Mila J."/>
            <person name="Yague J."/>
            <person name="Miralles A."/>
            <person name="Campbell K.S."/>
            <person name="Friedrich R.J."/>
            <person name="Cambier J."/>
            <person name="Vives J."/>
            <person name="de Fougerolles A.R."/>
            <person name="Springer T.A."/>
        </authorList>
    </citation>
    <scope>PROTEIN SEQUENCE OF 197-217; 269-293 AND 338-365</scope>
</reference>
<reference key="8">
    <citation type="journal article" date="1997" name="J. Cell Biol.">
        <title>Moesin interacts with the cytoplasmic region of intercellular adhesion molecule-3 and is redistributed to the uropod of T lymphocytes during cell polarization.</title>
        <authorList>
            <person name="Serrador J.M."/>
            <person name="Alonso-Lebrero J.L."/>
            <person name="del Pozo M.A."/>
            <person name="Furthmayr H."/>
            <person name="Schwartz-Albiez R."/>
            <person name="Calvo J."/>
            <person name="Lozano F."/>
            <person name="Sanchez-Madrid F."/>
        </authorList>
    </citation>
    <scope>INTERACTION WITH MSN</scope>
</reference>
<reference key="9">
    <citation type="journal article" date="2001" name="Eur. J. Biochem.">
        <title>Structural study of N-linked oligosaccharides of human intercellular adhesion molecule-3 (CD50).</title>
        <authorList>
            <person name="Funatsu O."/>
            <person name="Sato T."/>
            <person name="Kotovuori P."/>
            <person name="Gahmberg C.G."/>
            <person name="Ikekita M."/>
            <person name="Furukawa K."/>
        </authorList>
    </citation>
    <scope>STRUCTURE OF N-LINKED CARBOHYDRATES</scope>
</reference>
<reference key="10">
    <citation type="journal article" date="2005" name="J. Proteome Res.">
        <title>Human plasma N-glycoproteome analysis by immunoaffinity subtraction, hydrazide chemistry, and mass spectrometry.</title>
        <authorList>
            <person name="Liu T."/>
            <person name="Qian W.-J."/>
            <person name="Gritsenko M.A."/>
            <person name="Camp D.G. II"/>
            <person name="Monroe M.E."/>
            <person name="Moore R.J."/>
            <person name="Smith R.D."/>
        </authorList>
    </citation>
    <scope>GLYCOSYLATION [LARGE SCALE ANALYSIS] AT ASN-206 AND ASN-363</scope>
    <source>
        <tissue>Plasma</tissue>
    </source>
</reference>
<reference key="11">
    <citation type="journal article" date="2009" name="J. Proteome Res.">
        <title>Glycoproteomics analysis of human liver tissue by combination of multiple enzyme digestion and hydrazide chemistry.</title>
        <authorList>
            <person name="Chen R."/>
            <person name="Jiang X."/>
            <person name="Sun D."/>
            <person name="Han G."/>
            <person name="Wang F."/>
            <person name="Ye M."/>
            <person name="Wang L."/>
            <person name="Zou H."/>
        </authorList>
    </citation>
    <scope>GLYCOSYLATION [LARGE SCALE ANALYSIS] AT ASN-206 AND ASN-363</scope>
    <source>
        <tissue>Liver</tissue>
    </source>
</reference>
<reference key="12">
    <citation type="journal article" date="2009" name="Nat. Biotechnol.">
        <title>Mass-spectrometric identification and relative quantification of N-linked cell surface glycoproteins.</title>
        <authorList>
            <person name="Wollscheid B."/>
            <person name="Bausch-Fluck D."/>
            <person name="Henderson C."/>
            <person name="O'Brien R."/>
            <person name="Bibel M."/>
            <person name="Schiess R."/>
            <person name="Aebersold R."/>
            <person name="Watts J.D."/>
        </authorList>
    </citation>
    <scope>GLYCOSYLATION [LARGE SCALE ANALYSIS] AT ASN-84; ASN-87; ASN-134; ASN-206; ASN-295 AND ASN-363</scope>
    <source>
        <tissue>Leukemic T-cell</tissue>
    </source>
</reference>
<reference key="13">
    <citation type="journal article" date="2009" name="Sci. Signal.">
        <title>Quantitative phosphoproteomic analysis of T cell receptor signaling reveals system-wide modulation of protein-protein interactions.</title>
        <authorList>
            <person name="Mayya V."/>
            <person name="Lundgren D.H."/>
            <person name="Hwang S.-I."/>
            <person name="Rezaul K."/>
            <person name="Wu L."/>
            <person name="Eng J.K."/>
            <person name="Rodionov V."/>
            <person name="Han D.K."/>
        </authorList>
    </citation>
    <scope>IDENTIFICATION BY MASS SPECTROMETRY [LARGE SCALE ANALYSIS]</scope>
    <source>
        <tissue>Leukemic T-cell</tissue>
    </source>
</reference>
<reference key="14">
    <citation type="journal article" date="2011" name="BMC Syst. Biol.">
        <title>Initial characterization of the human central proteome.</title>
        <authorList>
            <person name="Burkard T.R."/>
            <person name="Planyavsky M."/>
            <person name="Kaupe I."/>
            <person name="Breitwieser F.P."/>
            <person name="Buerckstuemmer T."/>
            <person name="Bennett K.L."/>
            <person name="Superti-Furga G."/>
            <person name="Colinge J."/>
        </authorList>
    </citation>
    <scope>IDENTIFICATION BY MASS SPECTROMETRY [LARGE SCALE ANALYSIS]</scope>
</reference>
<reference key="15">
    <citation type="journal article" date="2013" name="Apoptosis">
        <title>Novel role of ICAM3 and LFA-1 in the clearance of apoptotic neutrophils by human macrophages.</title>
        <authorList>
            <person name="Kristof E."/>
            <person name="Zahuczky G."/>
            <person name="Katona K."/>
            <person name="Doro Z."/>
            <person name="Nagy E."/>
            <person name="Fesues L."/>
        </authorList>
    </citation>
    <scope>FUNCTION</scope>
    <scope>TISSUE SPECIFICITY</scope>
</reference>
<reference key="16">
    <citation type="journal article" date="2015" name="Proteomics">
        <title>N-terminome analysis of the human mitochondrial proteome.</title>
        <authorList>
            <person name="Vaca Jacome A.S."/>
            <person name="Rabilloud T."/>
            <person name="Schaeffer-Reiss C."/>
            <person name="Rompais M."/>
            <person name="Ayoub D."/>
            <person name="Lane L."/>
            <person name="Bairoch A."/>
            <person name="Van Dorsselaer A."/>
            <person name="Carapito C."/>
        </authorList>
    </citation>
    <scope>IDENTIFICATION BY MASS SPECTROMETRY [LARGE SCALE ANALYSIS]</scope>
</reference>
<reference key="17">
    <citation type="journal article" date="2005" name="Proc. Natl. Acad. Sci. U.S.A.">
        <title>An atomic resolution view of ICAM recognition in a complex between the binding domains of ICAM-3 and integrin alphaLbeta2.</title>
        <authorList>
            <person name="Song G."/>
            <person name="Yang Y."/>
            <person name="Liu J.-H."/>
            <person name="Casasnovas J.M."/>
            <person name="Shimaoka M."/>
            <person name="Springer T.A."/>
            <person name="Wang J.-H."/>
        </authorList>
    </citation>
    <scope>X-RAY CRYSTALLOGRAPHY (1.66 ANGSTROMS) OF 30-115 IN COMPLEX WITH INTEGRIN ALPHALBETA2</scope>
    <scope>DISULFIDE BOND</scope>
    <scope>GLYCOSYLATION AT ASN-52 AND ASN-110</scope>
</reference>
<feature type="signal peptide" evidence="1">
    <location>
        <begin position="1"/>
        <end position="29"/>
    </location>
</feature>
<feature type="chain" id="PRO_0000014794" description="Intercellular adhesion molecule 3">
    <location>
        <begin position="30"/>
        <end position="547"/>
    </location>
</feature>
<feature type="topological domain" description="Extracellular" evidence="1">
    <location>
        <begin position="30"/>
        <end position="485"/>
    </location>
</feature>
<feature type="transmembrane region" description="Helical" evidence="1">
    <location>
        <begin position="486"/>
        <end position="510"/>
    </location>
</feature>
<feature type="topological domain" description="Cytoplasmic" evidence="1">
    <location>
        <begin position="511"/>
        <end position="547"/>
    </location>
</feature>
<feature type="domain" description="Ig-like C2-type 1">
    <location>
        <begin position="46"/>
        <end position="103"/>
    </location>
</feature>
<feature type="domain" description="Ig-like C2-type 2">
    <location>
        <begin position="132"/>
        <end position="197"/>
    </location>
</feature>
<feature type="domain" description="Ig-like C2-type 3">
    <location>
        <begin position="234"/>
        <end position="301"/>
    </location>
</feature>
<feature type="domain" description="Ig-like C2-type 4">
    <location>
        <begin position="329"/>
        <end position="382"/>
    </location>
</feature>
<feature type="domain" description="Ig-like C2-type 5">
    <location>
        <begin position="416"/>
        <end position="469"/>
    </location>
</feature>
<feature type="glycosylation site" description="N-linked (GlcNAc...) asparagine" evidence="5">
    <location>
        <position position="52"/>
    </location>
</feature>
<feature type="glycosylation site" description="N-linked (GlcNAc...) asparagine" evidence="8">
    <location>
        <position position="84"/>
    </location>
</feature>
<feature type="glycosylation site" description="N-linked (GlcNAc...) asparagine" evidence="8">
    <location>
        <position position="87"/>
    </location>
</feature>
<feature type="glycosylation site" description="N-linked (GlcNAc...) asparagine" evidence="1">
    <location>
        <position position="101"/>
    </location>
</feature>
<feature type="glycosylation site" description="N-linked (GlcNAc...) asparagine" evidence="5">
    <location>
        <position position="110"/>
    </location>
</feature>
<feature type="glycosylation site" description="N-linked (GlcNAc...) asparagine" evidence="8">
    <location>
        <position position="134"/>
    </location>
</feature>
<feature type="glycosylation site" description="N-linked (GlcNAc...) asparagine" evidence="6 7 8">
    <location>
        <position position="206"/>
    </location>
</feature>
<feature type="glycosylation site" description="N-linked (GlcNAc...) asparagine" evidence="1">
    <location>
        <position position="264"/>
    </location>
</feature>
<feature type="glycosylation site" description="N-linked (GlcNAc...) asparagine" evidence="8">
    <location>
        <position position="295"/>
    </location>
</feature>
<feature type="glycosylation site" description="N-linked (GlcNAc...) asparagine" evidence="1">
    <location>
        <position position="308"/>
    </location>
</feature>
<feature type="glycosylation site" description="N-linked (GlcNAc...) asparagine" evidence="1">
    <location>
        <position position="320"/>
    </location>
</feature>
<feature type="glycosylation site" description="N-linked (GlcNAc...) asparagine" evidence="6 7 8">
    <location>
        <position position="363"/>
    </location>
</feature>
<feature type="glycosylation site" description="N-linked (GlcNAc...) asparagine" evidence="1">
    <location>
        <position position="389"/>
    </location>
</feature>
<feature type="glycosylation site" description="N-linked (GlcNAc...) asparagine" evidence="1">
    <location>
        <position position="453"/>
    </location>
</feature>
<feature type="glycosylation site" description="N-linked (GlcNAc...) asparagine" evidence="1">
    <location>
        <position position="457"/>
    </location>
</feature>
<feature type="disulfide bond" evidence="2 5 13">
    <location>
        <begin position="53"/>
        <end position="96"/>
    </location>
</feature>
<feature type="disulfide bond" evidence="5 13">
    <location>
        <begin position="57"/>
        <end position="100"/>
    </location>
</feature>
<feature type="disulfide bond" evidence="2">
    <location>
        <begin position="139"/>
        <end position="190"/>
    </location>
</feature>
<feature type="disulfide bond" evidence="2">
    <location>
        <begin position="241"/>
        <end position="294"/>
    </location>
</feature>
<feature type="disulfide bond" evidence="2">
    <location>
        <begin position="336"/>
        <end position="375"/>
    </location>
</feature>
<feature type="disulfide bond" evidence="2">
    <location>
        <begin position="423"/>
        <end position="462"/>
    </location>
</feature>
<feature type="sequence variant" id="VAR_046547" description="In dbSNP:rs17697947.">
    <original>I</original>
    <variation>V</variation>
    <location>
        <position position="63"/>
    </location>
</feature>
<feature type="sequence variant" id="VAR_059394" description="In dbSNP:rs7258015." evidence="4 10">
    <original>R</original>
    <variation>G</variation>
    <location>
        <position position="115"/>
    </location>
</feature>
<feature type="sequence variant" id="VAR_046548" description="In dbSNP:rs2304237." evidence="3 4 10">
    <original>D</original>
    <variation>G</variation>
    <location>
        <position position="143"/>
    </location>
</feature>
<feature type="sequence variant" id="VAR_024498" description="In dbSNP:rs2230399.">
    <original>S</original>
    <variation>T</variation>
    <location>
        <position position="525"/>
    </location>
</feature>
<feature type="sequence conflict" description="In Ref. 1; AAB24331." evidence="12" ref="1">
    <original>S</original>
    <variation>F</variation>
    <location>
        <position position="60"/>
    </location>
</feature>
<feature type="strand" evidence="14">
    <location>
        <begin position="34"/>
        <end position="38"/>
    </location>
</feature>
<feature type="strand" evidence="14">
    <location>
        <begin position="48"/>
        <end position="55"/>
    </location>
</feature>
<feature type="strand" evidence="14">
    <location>
        <begin position="61"/>
        <end position="66"/>
    </location>
</feature>
<feature type="strand" evidence="14">
    <location>
        <begin position="68"/>
        <end position="77"/>
    </location>
</feature>
<feature type="strand" evidence="14">
    <location>
        <begin position="80"/>
        <end position="86"/>
    </location>
</feature>
<feature type="strand" evidence="14">
    <location>
        <begin position="92"/>
        <end position="100"/>
    </location>
</feature>
<feature type="strand" evidence="14">
    <location>
        <begin position="103"/>
        <end position="113"/>
    </location>
</feature>
<dbReference type="EMBL" id="S50015">
    <property type="protein sequence ID" value="AAB24331.2"/>
    <property type="status" value="ALT_SEQ"/>
    <property type="molecule type" value="mRNA"/>
</dbReference>
<dbReference type="EMBL" id="X69711">
    <property type="protein sequence ID" value="CAA49369.1"/>
    <property type="molecule type" value="mRNA"/>
</dbReference>
<dbReference type="EMBL" id="X69819">
    <property type="protein sequence ID" value="CAA49473.1"/>
    <property type="molecule type" value="mRNA"/>
</dbReference>
<dbReference type="EMBL" id="DQ217937">
    <property type="protein sequence ID" value="ABB01007.1"/>
    <property type="molecule type" value="Genomic_DNA"/>
</dbReference>
<dbReference type="EMBL" id="CH471106">
    <property type="protein sequence ID" value="EAW84092.1"/>
    <property type="molecule type" value="Genomic_DNA"/>
</dbReference>
<dbReference type="EMBL" id="BC058903">
    <property type="protein sequence ID" value="AAH58903.1"/>
    <property type="molecule type" value="mRNA"/>
</dbReference>
<dbReference type="CCDS" id="CCDS12235.1"/>
<dbReference type="PIR" id="S28904">
    <property type="entry name" value="S28904"/>
</dbReference>
<dbReference type="RefSeq" id="NP_002153.2">
    <property type="nucleotide sequence ID" value="NM_002162.5"/>
</dbReference>
<dbReference type="PDB" id="1T0P">
    <property type="method" value="X-ray"/>
    <property type="resolution" value="1.66 A"/>
    <property type="chains" value="B=30-114"/>
</dbReference>
<dbReference type="PDBsum" id="1T0P"/>
<dbReference type="SMR" id="P32942"/>
<dbReference type="BioGRID" id="109612">
    <property type="interactions" value="29"/>
</dbReference>
<dbReference type="FunCoup" id="P32942">
    <property type="interactions" value="240"/>
</dbReference>
<dbReference type="IntAct" id="P32942">
    <property type="interactions" value="17"/>
</dbReference>
<dbReference type="MINT" id="P32942"/>
<dbReference type="STRING" id="9606.ENSP00000160262"/>
<dbReference type="ChEMBL" id="CHEMBL3712862"/>
<dbReference type="GlyConnect" id="286">
    <property type="glycosylation" value="17 N-Linked glycans"/>
</dbReference>
<dbReference type="GlyCosmos" id="P32942">
    <property type="glycosylation" value="15 sites, 26 glycans"/>
</dbReference>
<dbReference type="GlyGen" id="P32942">
    <property type="glycosylation" value="18 sites, 50 N-linked glycans (5 sites), 1 O-linked glycan (1 site)"/>
</dbReference>
<dbReference type="iPTMnet" id="P32942"/>
<dbReference type="PhosphoSitePlus" id="P32942"/>
<dbReference type="BioMuta" id="ICAM3"/>
<dbReference type="DMDM" id="206729872"/>
<dbReference type="jPOST" id="P32942"/>
<dbReference type="MassIVE" id="P32942"/>
<dbReference type="PaxDb" id="9606-ENSP00000160262"/>
<dbReference type="PeptideAtlas" id="P32942"/>
<dbReference type="ProteomicsDB" id="54892"/>
<dbReference type="Antibodypedia" id="3738">
    <property type="antibodies" value="1630 antibodies from 45 providers"/>
</dbReference>
<dbReference type="DNASU" id="3385"/>
<dbReference type="Ensembl" id="ENST00000160262.10">
    <property type="protein sequence ID" value="ENSP00000160262.3"/>
    <property type="gene ID" value="ENSG00000076662.11"/>
</dbReference>
<dbReference type="GeneID" id="3385"/>
<dbReference type="KEGG" id="hsa:3385"/>
<dbReference type="MANE-Select" id="ENST00000160262.10">
    <property type="protein sequence ID" value="ENSP00000160262.3"/>
    <property type="RefSeq nucleotide sequence ID" value="NM_002162.5"/>
    <property type="RefSeq protein sequence ID" value="NP_002153.2"/>
</dbReference>
<dbReference type="UCSC" id="uc002mob.3">
    <property type="organism name" value="human"/>
</dbReference>
<dbReference type="AGR" id="HGNC:5346"/>
<dbReference type="CTD" id="3385"/>
<dbReference type="DisGeNET" id="3385"/>
<dbReference type="GeneCards" id="ICAM3"/>
<dbReference type="HGNC" id="HGNC:5346">
    <property type="gene designation" value="ICAM3"/>
</dbReference>
<dbReference type="HPA" id="ENSG00000076662">
    <property type="expression patterns" value="Tissue enhanced (bone marrow, lymphoid tissue)"/>
</dbReference>
<dbReference type="MIM" id="146631">
    <property type="type" value="gene"/>
</dbReference>
<dbReference type="neXtProt" id="NX_P32942"/>
<dbReference type="OpenTargets" id="ENSG00000076662"/>
<dbReference type="PharmGKB" id="PA29594"/>
<dbReference type="VEuPathDB" id="HostDB:ENSG00000076662"/>
<dbReference type="eggNOG" id="ENOG502RZRA">
    <property type="taxonomic scope" value="Eukaryota"/>
</dbReference>
<dbReference type="GeneTree" id="ENSGT00940000159005"/>
<dbReference type="InParanoid" id="P32942"/>
<dbReference type="OMA" id="QAKCPQR"/>
<dbReference type="OrthoDB" id="6250964at2759"/>
<dbReference type="PAN-GO" id="P32942">
    <property type="GO annotations" value="3 GO annotations based on evolutionary models"/>
</dbReference>
<dbReference type="PhylomeDB" id="P32942"/>
<dbReference type="TreeFam" id="TF333745"/>
<dbReference type="PathwayCommons" id="P32942"/>
<dbReference type="Reactome" id="R-HSA-198933">
    <property type="pathway name" value="Immunoregulatory interactions between a Lymphoid and a non-Lymphoid cell"/>
</dbReference>
<dbReference type="Reactome" id="R-HSA-216083">
    <property type="pathway name" value="Integrin cell surface interactions"/>
</dbReference>
<dbReference type="Reactome" id="R-HSA-5621575">
    <property type="pathway name" value="CD209 (DC-SIGN) signaling"/>
</dbReference>
<dbReference type="SignaLink" id="P32942"/>
<dbReference type="SIGNOR" id="P32942"/>
<dbReference type="BioGRID-ORCS" id="3385">
    <property type="hits" value="16 hits in 1163 CRISPR screens"/>
</dbReference>
<dbReference type="ChiTaRS" id="ICAM3">
    <property type="organism name" value="human"/>
</dbReference>
<dbReference type="EvolutionaryTrace" id="P32942"/>
<dbReference type="GeneWiki" id="ICAM3"/>
<dbReference type="GenomeRNAi" id="3385"/>
<dbReference type="Pharos" id="P32942">
    <property type="development level" value="Tbio"/>
</dbReference>
<dbReference type="PRO" id="PR:P32942"/>
<dbReference type="Proteomes" id="UP000005640">
    <property type="component" value="Chromosome 19"/>
</dbReference>
<dbReference type="RNAct" id="P32942">
    <property type="molecule type" value="protein"/>
</dbReference>
<dbReference type="Bgee" id="ENSG00000076662">
    <property type="expression patterns" value="Expressed in blood and 163 other cell types or tissues"/>
</dbReference>
<dbReference type="ExpressionAtlas" id="P32942">
    <property type="expression patterns" value="baseline and differential"/>
</dbReference>
<dbReference type="GO" id="GO:0070062">
    <property type="term" value="C:extracellular exosome"/>
    <property type="evidence" value="ECO:0007005"/>
    <property type="project" value="UniProtKB"/>
</dbReference>
<dbReference type="GO" id="GO:0005886">
    <property type="term" value="C:plasma membrane"/>
    <property type="evidence" value="ECO:0000318"/>
    <property type="project" value="GO_Central"/>
</dbReference>
<dbReference type="GO" id="GO:0005178">
    <property type="term" value="F:integrin binding"/>
    <property type="evidence" value="ECO:0000353"/>
    <property type="project" value="BHF-UCL"/>
</dbReference>
<dbReference type="GO" id="GO:0005102">
    <property type="term" value="F:signaling receptor binding"/>
    <property type="evidence" value="ECO:0000304"/>
    <property type="project" value="ProtInc"/>
</dbReference>
<dbReference type="GO" id="GO:0007155">
    <property type="term" value="P:cell adhesion"/>
    <property type="evidence" value="ECO:0000318"/>
    <property type="project" value="GO_Central"/>
</dbReference>
<dbReference type="GO" id="GO:0098609">
    <property type="term" value="P:cell-cell adhesion"/>
    <property type="evidence" value="ECO:0007669"/>
    <property type="project" value="InterPro"/>
</dbReference>
<dbReference type="GO" id="GO:0006909">
    <property type="term" value="P:phagocytosis"/>
    <property type="evidence" value="ECO:0007669"/>
    <property type="project" value="UniProtKB-KW"/>
</dbReference>
<dbReference type="CDD" id="cd00096">
    <property type="entry name" value="Ig"/>
    <property type="match status" value="1"/>
</dbReference>
<dbReference type="CDD" id="cd20997">
    <property type="entry name" value="IgI_N_ICAM-3"/>
    <property type="match status" value="1"/>
</dbReference>
<dbReference type="FunFam" id="2.60.40.10:FF:000194">
    <property type="entry name" value="Intercellular adhesion molecule 1"/>
    <property type="match status" value="1"/>
</dbReference>
<dbReference type="FunFam" id="2.60.40.10:FF:000459">
    <property type="entry name" value="Intercellular adhesion molecule 1"/>
    <property type="match status" value="1"/>
</dbReference>
<dbReference type="FunFam" id="2.60.40.10:FF:000648">
    <property type="entry name" value="Intercellular adhesion molecule 1"/>
    <property type="match status" value="1"/>
</dbReference>
<dbReference type="FunFam" id="2.60.40.10:FF:002232">
    <property type="entry name" value="Intercellular adhesion molecule 3"/>
    <property type="match status" value="1"/>
</dbReference>
<dbReference type="FunFam" id="2.60.40.10:FF:000338">
    <property type="entry name" value="intercellular adhesion molecule 5"/>
    <property type="match status" value="1"/>
</dbReference>
<dbReference type="Gene3D" id="2.60.40.10">
    <property type="entry name" value="Immunoglobulins"/>
    <property type="match status" value="5"/>
</dbReference>
<dbReference type="InterPro" id="IPR003988">
    <property type="entry name" value="ICAM"/>
</dbReference>
<dbReference type="InterPro" id="IPR048679">
    <property type="entry name" value="ICAM1_3_5_D2"/>
</dbReference>
<dbReference type="InterPro" id="IPR013768">
    <property type="entry name" value="ICAM_N"/>
</dbReference>
<dbReference type="InterPro" id="IPR047012">
    <property type="entry name" value="ICAM_VCAM"/>
</dbReference>
<dbReference type="InterPro" id="IPR003987">
    <property type="entry name" value="ICAM_VCAM_N"/>
</dbReference>
<dbReference type="InterPro" id="IPR007110">
    <property type="entry name" value="Ig-like_dom"/>
</dbReference>
<dbReference type="InterPro" id="IPR036179">
    <property type="entry name" value="Ig-like_dom_sf"/>
</dbReference>
<dbReference type="InterPro" id="IPR013783">
    <property type="entry name" value="Ig-like_fold"/>
</dbReference>
<dbReference type="InterPro" id="IPR003599">
    <property type="entry name" value="Ig_sub"/>
</dbReference>
<dbReference type="PANTHER" id="PTHR13771">
    <property type="entry name" value="INTERCELLULAR ADHESION MOLECULE"/>
    <property type="match status" value="1"/>
</dbReference>
<dbReference type="PANTHER" id="PTHR13771:SF17">
    <property type="entry name" value="INTERCELLULAR ADHESION MOLECULE 3"/>
    <property type="match status" value="1"/>
</dbReference>
<dbReference type="Pfam" id="PF21146">
    <property type="entry name" value="ICAM1_3_5_D2"/>
    <property type="match status" value="1"/>
</dbReference>
<dbReference type="Pfam" id="PF03921">
    <property type="entry name" value="ICAM_N"/>
    <property type="match status" value="1"/>
</dbReference>
<dbReference type="PRINTS" id="PR01473">
    <property type="entry name" value="ICAM"/>
</dbReference>
<dbReference type="PRINTS" id="PR01472">
    <property type="entry name" value="ICAMVCAM1"/>
</dbReference>
<dbReference type="SMART" id="SM00409">
    <property type="entry name" value="IG"/>
    <property type="match status" value="3"/>
</dbReference>
<dbReference type="SUPFAM" id="SSF48726">
    <property type="entry name" value="Immunoglobulin"/>
    <property type="match status" value="5"/>
</dbReference>
<dbReference type="PROSITE" id="PS50835">
    <property type="entry name" value="IG_LIKE"/>
    <property type="match status" value="1"/>
</dbReference>
<evidence type="ECO:0000255" key="1"/>
<evidence type="ECO:0000255" key="2">
    <source>
        <dbReference type="PROSITE-ProRule" id="PRU00114"/>
    </source>
</evidence>
<evidence type="ECO:0000269" key="3">
    <source>
    </source>
</evidence>
<evidence type="ECO:0000269" key="4">
    <source>
    </source>
</evidence>
<evidence type="ECO:0000269" key="5">
    <source>
    </source>
</evidence>
<evidence type="ECO:0000269" key="6">
    <source>
    </source>
</evidence>
<evidence type="ECO:0000269" key="7">
    <source>
    </source>
</evidence>
<evidence type="ECO:0000269" key="8">
    <source>
    </source>
</evidence>
<evidence type="ECO:0000269" key="9">
    <source>
    </source>
</evidence>
<evidence type="ECO:0000269" key="10">
    <source>
    </source>
</evidence>
<evidence type="ECO:0000269" key="11">
    <source>
    </source>
</evidence>
<evidence type="ECO:0000305" key="12"/>
<evidence type="ECO:0007744" key="13">
    <source>
        <dbReference type="PDB" id="1T0P"/>
    </source>
</evidence>
<evidence type="ECO:0007829" key="14">
    <source>
        <dbReference type="PDB" id="1T0P"/>
    </source>
</evidence>
<gene>
    <name type="primary">ICAM3</name>
</gene>
<protein>
    <recommendedName>
        <fullName>Intercellular adhesion molecule 3</fullName>
        <shortName>ICAM-3</shortName>
    </recommendedName>
    <alternativeName>
        <fullName>CDw50</fullName>
    </alternativeName>
    <alternativeName>
        <fullName>ICAM-R</fullName>
    </alternativeName>
    <cdAntigenName>CD50</cdAntigenName>
</protein>
<comment type="function">
    <text evidence="3 9">ICAM proteins are ligands for the leukocyte adhesion protein LFA-1 (integrin alpha-L/beta-2) (PubMed:1448173). ICAM3 is also a ligand for integrin alpha-D/beta-2. In association with integrin alpha-L/beta-2, contributes to apoptotic neutrophil phagocytosis by macrophages (PubMed:23775590).</text>
</comment>
<comment type="subunit">
    <text evidence="11">Interacts with moesin/MSN.</text>
</comment>
<comment type="interaction">
    <interactant intactId="EBI-725421">
        <id>P32942</id>
    </interactant>
    <interactant intactId="EBI-12244618">
        <id>Q6PL45-2</id>
        <label>BRICD5</label>
    </interactant>
    <organismsDiffer>false</organismsDiffer>
    <experiments>3</experiments>
</comment>
<comment type="interaction">
    <interactant intactId="EBI-725421">
        <id>P32942</id>
    </interactant>
    <interactant intactId="EBI-12256978">
        <id>Q8N6F1-2</id>
        <label>CLDN19</label>
    </interactant>
    <organismsDiffer>false</organismsDiffer>
    <experiments>3</experiments>
</comment>
<comment type="interaction">
    <interactant intactId="EBI-725421">
        <id>P32942</id>
    </interactant>
    <interactant intactId="EBI-9316372">
        <id>O14493</id>
        <label>CLDN4</label>
    </interactant>
    <organismsDiffer>false</organismsDiffer>
    <experiments>3</experiments>
</comment>
<comment type="interaction">
    <interactant intactId="EBI-725421">
        <id>P32942</id>
    </interactant>
    <interactant intactId="EBI-10215665">
        <id>P56851</id>
        <label>EDDM3B</label>
    </interactant>
    <organismsDiffer>false</organismsDiffer>
    <experiments>3</experiments>
</comment>
<comment type="interaction">
    <interactant intactId="EBI-725421">
        <id>P32942</id>
    </interactant>
    <interactant intactId="EBI-10317425">
        <id>Q9NZG7</id>
        <label>NINJ2</label>
    </interactant>
    <organismsDiffer>false</organismsDiffer>
    <experiments>3</experiments>
</comment>
<comment type="interaction">
    <interactant intactId="EBI-725421">
        <id>P32942</id>
    </interactant>
    <interactant intactId="EBI-8652744">
        <id>Q96IW7</id>
        <label>SEC22A</label>
    </interactant>
    <organismsDiffer>false</organismsDiffer>
    <experiments>3</experiments>
</comment>
<comment type="interaction">
    <interactant intactId="EBI-725421">
        <id>P32942</id>
    </interactant>
    <interactant intactId="EBI-10197617">
        <id>P11686</id>
        <label>SFTPC</label>
    </interactant>
    <organismsDiffer>false</organismsDiffer>
    <experiments>3</experiments>
</comment>
<comment type="interaction">
    <interactant intactId="EBI-725421">
        <id>P32942</id>
    </interactant>
    <interactant intactId="EBI-8640191">
        <id>Q9NRQ5</id>
        <label>SMCO4</label>
    </interactant>
    <organismsDiffer>false</organismsDiffer>
    <experiments>3</experiments>
</comment>
<comment type="interaction">
    <interactant intactId="EBI-725421">
        <id>P32942</id>
    </interactant>
    <interactant intactId="EBI-12188413">
        <id>B2RUZ4</id>
        <label>SMIM1</label>
    </interactant>
    <organismsDiffer>false</organismsDiffer>
    <experiments>3</experiments>
</comment>
<comment type="interaction">
    <interactant intactId="EBI-725421">
        <id>P32942</id>
    </interactant>
    <interactant intactId="EBI-6623146">
        <id>P30536</id>
        <label>TSPO</label>
    </interactant>
    <organismsDiffer>false</organismsDiffer>
    <experiments>3</experiments>
</comment>
<comment type="subcellular location">
    <subcellularLocation>
        <location>Membrane</location>
        <topology>Single-pass type I membrane protein</topology>
    </subcellularLocation>
</comment>
<comment type="tissue specificity">
    <text evidence="3 9">Leukocytes.</text>
</comment>
<comment type="PTM">
    <text>Upon stimulation by a physiologic stimuli becomes rapidly and transiently phosphorylated on serine residues.</text>
</comment>
<comment type="PTM">
    <text evidence="5 6 7 8">N-glycosylated; glycans consist of a mixture of tri- and tetra-antennary complex-type chains and high-mannose chains.</text>
</comment>
<comment type="similarity">
    <text evidence="12">Belongs to the immunoglobulin superfamily. ICAM family.</text>
</comment>
<comment type="online information" name="Functional Glycomics Gateway - Glycan Binding">
    <link uri="http://www.functionalglycomics.org/glycomics/GBPServlet?&amp;operationType=view&amp;cbpId=cbp_hum_Itlect_263"/>
    <text>ICAM-3</text>
</comment>
<accession>P32942</accession>
<accession>Q6PD68</accession>
<organism>
    <name type="scientific">Homo sapiens</name>
    <name type="common">Human</name>
    <dbReference type="NCBI Taxonomy" id="9606"/>
    <lineage>
        <taxon>Eukaryota</taxon>
        <taxon>Metazoa</taxon>
        <taxon>Chordata</taxon>
        <taxon>Craniata</taxon>
        <taxon>Vertebrata</taxon>
        <taxon>Euteleostomi</taxon>
        <taxon>Mammalia</taxon>
        <taxon>Eutheria</taxon>
        <taxon>Euarchontoglires</taxon>
        <taxon>Primates</taxon>
        <taxon>Haplorrhini</taxon>
        <taxon>Catarrhini</taxon>
        <taxon>Hominidae</taxon>
        <taxon>Homo</taxon>
    </lineage>
</organism>
<keyword id="KW-0002">3D-structure</keyword>
<keyword id="KW-0130">Cell adhesion</keyword>
<keyword id="KW-0903">Direct protein sequencing</keyword>
<keyword id="KW-1015">Disulfide bond</keyword>
<keyword id="KW-0325">Glycoprotein</keyword>
<keyword id="KW-0393">Immunoglobulin domain</keyword>
<keyword id="KW-0472">Membrane</keyword>
<keyword id="KW-0581">Phagocytosis</keyword>
<keyword id="KW-0597">Phosphoprotein</keyword>
<keyword id="KW-1267">Proteomics identification</keyword>
<keyword id="KW-1185">Reference proteome</keyword>
<keyword id="KW-0677">Repeat</keyword>
<keyword id="KW-0732">Signal</keyword>
<keyword id="KW-0812">Transmembrane</keyword>
<keyword id="KW-1133">Transmembrane helix</keyword>